<reference key="1">
    <citation type="journal article" date="2004" name="Nucleic Acids Res.">
        <title>The genome sequence of Bacillus cereus ATCC 10987 reveals metabolic adaptations and a large plasmid related to Bacillus anthracis pXO1.</title>
        <authorList>
            <person name="Rasko D.A."/>
            <person name="Ravel J."/>
            <person name="Oekstad O.A."/>
            <person name="Helgason E."/>
            <person name="Cer R.Z."/>
            <person name="Jiang L."/>
            <person name="Shores K.A."/>
            <person name="Fouts D.E."/>
            <person name="Tourasse N.J."/>
            <person name="Angiuoli S.V."/>
            <person name="Kolonay J.F."/>
            <person name="Nelson W.C."/>
            <person name="Kolstoe A.-B."/>
            <person name="Fraser C.M."/>
            <person name="Read T.D."/>
        </authorList>
    </citation>
    <scope>NUCLEOTIDE SEQUENCE [LARGE SCALE GENOMIC DNA]</scope>
    <source>
        <strain>ATCC 10987 / NRS 248</strain>
    </source>
</reference>
<evidence type="ECO:0000255" key="1">
    <source>
        <dbReference type="HAMAP-Rule" id="MF_00044"/>
    </source>
</evidence>
<protein>
    <recommendedName>
        <fullName evidence="1">Aspartate--tRNA(Asp/Asn) ligase</fullName>
        <ecNumber evidence="1">6.1.1.23</ecNumber>
    </recommendedName>
    <alternativeName>
        <fullName evidence="1">Aspartyl-tRNA synthetase</fullName>
        <shortName evidence="1">AspRS</shortName>
    </alternativeName>
    <alternativeName>
        <fullName evidence="1">Non-discriminating aspartyl-tRNA synthetase</fullName>
        <shortName evidence="1">ND-AspRS</shortName>
    </alternativeName>
</protein>
<name>SYDND_BACC1</name>
<dbReference type="EC" id="6.1.1.23" evidence="1"/>
<dbReference type="EMBL" id="AE017194">
    <property type="protein sequence ID" value="AAS43386.1"/>
    <property type="molecule type" value="Genomic_DNA"/>
</dbReference>
<dbReference type="SMR" id="Q730D1"/>
<dbReference type="KEGG" id="bca:BCE_4485"/>
<dbReference type="HOGENOM" id="CLU_014330_3_2_9"/>
<dbReference type="Proteomes" id="UP000002527">
    <property type="component" value="Chromosome"/>
</dbReference>
<dbReference type="GO" id="GO:0005737">
    <property type="term" value="C:cytoplasm"/>
    <property type="evidence" value="ECO:0007669"/>
    <property type="project" value="UniProtKB-SubCell"/>
</dbReference>
<dbReference type="GO" id="GO:0004815">
    <property type="term" value="F:aspartate-tRNA ligase activity"/>
    <property type="evidence" value="ECO:0007669"/>
    <property type="project" value="UniProtKB-UniRule"/>
</dbReference>
<dbReference type="GO" id="GO:0050560">
    <property type="term" value="F:aspartate-tRNA(Asn) ligase activity"/>
    <property type="evidence" value="ECO:0007669"/>
    <property type="project" value="UniProtKB-EC"/>
</dbReference>
<dbReference type="GO" id="GO:0005524">
    <property type="term" value="F:ATP binding"/>
    <property type="evidence" value="ECO:0007669"/>
    <property type="project" value="UniProtKB-UniRule"/>
</dbReference>
<dbReference type="GO" id="GO:0140096">
    <property type="term" value="F:catalytic activity, acting on a protein"/>
    <property type="evidence" value="ECO:0007669"/>
    <property type="project" value="UniProtKB-ARBA"/>
</dbReference>
<dbReference type="GO" id="GO:0003676">
    <property type="term" value="F:nucleic acid binding"/>
    <property type="evidence" value="ECO:0007669"/>
    <property type="project" value="InterPro"/>
</dbReference>
<dbReference type="GO" id="GO:0016740">
    <property type="term" value="F:transferase activity"/>
    <property type="evidence" value="ECO:0007669"/>
    <property type="project" value="UniProtKB-ARBA"/>
</dbReference>
<dbReference type="GO" id="GO:0006422">
    <property type="term" value="P:aspartyl-tRNA aminoacylation"/>
    <property type="evidence" value="ECO:0007669"/>
    <property type="project" value="UniProtKB-UniRule"/>
</dbReference>
<dbReference type="CDD" id="cd00777">
    <property type="entry name" value="AspRS_core"/>
    <property type="match status" value="1"/>
</dbReference>
<dbReference type="CDD" id="cd04317">
    <property type="entry name" value="EcAspRS_like_N"/>
    <property type="match status" value="1"/>
</dbReference>
<dbReference type="Gene3D" id="3.30.930.10">
    <property type="entry name" value="Bira Bifunctional Protein, Domain 2"/>
    <property type="match status" value="1"/>
</dbReference>
<dbReference type="Gene3D" id="3.30.1360.30">
    <property type="entry name" value="GAD-like domain"/>
    <property type="match status" value="1"/>
</dbReference>
<dbReference type="Gene3D" id="2.40.50.140">
    <property type="entry name" value="Nucleic acid-binding proteins"/>
    <property type="match status" value="1"/>
</dbReference>
<dbReference type="HAMAP" id="MF_00044">
    <property type="entry name" value="Asp_tRNA_synth_type1"/>
    <property type="match status" value="1"/>
</dbReference>
<dbReference type="InterPro" id="IPR004364">
    <property type="entry name" value="Aa-tRNA-synt_II"/>
</dbReference>
<dbReference type="InterPro" id="IPR006195">
    <property type="entry name" value="aa-tRNA-synth_II"/>
</dbReference>
<dbReference type="InterPro" id="IPR045864">
    <property type="entry name" value="aa-tRNA-synth_II/BPL/LPL"/>
</dbReference>
<dbReference type="InterPro" id="IPR004524">
    <property type="entry name" value="Asp-tRNA-ligase_1"/>
</dbReference>
<dbReference type="InterPro" id="IPR047089">
    <property type="entry name" value="Asp-tRNA-ligase_1_N"/>
</dbReference>
<dbReference type="InterPro" id="IPR002312">
    <property type="entry name" value="Asp/Asn-tRNA-synth_IIb"/>
</dbReference>
<dbReference type="InterPro" id="IPR047090">
    <property type="entry name" value="AspRS_core"/>
</dbReference>
<dbReference type="InterPro" id="IPR004115">
    <property type="entry name" value="GAD-like_sf"/>
</dbReference>
<dbReference type="InterPro" id="IPR029351">
    <property type="entry name" value="GAD_dom"/>
</dbReference>
<dbReference type="InterPro" id="IPR012340">
    <property type="entry name" value="NA-bd_OB-fold"/>
</dbReference>
<dbReference type="InterPro" id="IPR004365">
    <property type="entry name" value="NA-bd_OB_tRNA"/>
</dbReference>
<dbReference type="NCBIfam" id="TIGR00459">
    <property type="entry name" value="aspS_bact"/>
    <property type="match status" value="1"/>
</dbReference>
<dbReference type="NCBIfam" id="NF001750">
    <property type="entry name" value="PRK00476.1"/>
    <property type="match status" value="1"/>
</dbReference>
<dbReference type="PANTHER" id="PTHR22594:SF5">
    <property type="entry name" value="ASPARTATE--TRNA LIGASE, MITOCHONDRIAL"/>
    <property type="match status" value="1"/>
</dbReference>
<dbReference type="PANTHER" id="PTHR22594">
    <property type="entry name" value="ASPARTYL/LYSYL-TRNA SYNTHETASE"/>
    <property type="match status" value="1"/>
</dbReference>
<dbReference type="Pfam" id="PF02938">
    <property type="entry name" value="GAD"/>
    <property type="match status" value="1"/>
</dbReference>
<dbReference type="Pfam" id="PF00152">
    <property type="entry name" value="tRNA-synt_2"/>
    <property type="match status" value="1"/>
</dbReference>
<dbReference type="Pfam" id="PF01336">
    <property type="entry name" value="tRNA_anti-codon"/>
    <property type="match status" value="1"/>
</dbReference>
<dbReference type="PRINTS" id="PR01042">
    <property type="entry name" value="TRNASYNTHASP"/>
</dbReference>
<dbReference type="SUPFAM" id="SSF55681">
    <property type="entry name" value="Class II aaRS and biotin synthetases"/>
    <property type="match status" value="1"/>
</dbReference>
<dbReference type="SUPFAM" id="SSF55261">
    <property type="entry name" value="GAD domain-like"/>
    <property type="match status" value="1"/>
</dbReference>
<dbReference type="SUPFAM" id="SSF50249">
    <property type="entry name" value="Nucleic acid-binding proteins"/>
    <property type="match status" value="1"/>
</dbReference>
<dbReference type="PROSITE" id="PS50862">
    <property type="entry name" value="AA_TRNA_LIGASE_II"/>
    <property type="match status" value="1"/>
</dbReference>
<organism>
    <name type="scientific">Bacillus cereus (strain ATCC 10987 / NRS 248)</name>
    <dbReference type="NCBI Taxonomy" id="222523"/>
    <lineage>
        <taxon>Bacteria</taxon>
        <taxon>Bacillati</taxon>
        <taxon>Bacillota</taxon>
        <taxon>Bacilli</taxon>
        <taxon>Bacillales</taxon>
        <taxon>Bacillaceae</taxon>
        <taxon>Bacillus</taxon>
        <taxon>Bacillus cereus group</taxon>
    </lineage>
</organism>
<comment type="function">
    <text evidence="1">Aspartyl-tRNA synthetase with relaxed tRNA specificity since it is able to aspartylate not only its cognate tRNA(Asp) but also tRNA(Asn). Reaction proceeds in two steps: L-aspartate is first activated by ATP to form Asp-AMP and then transferred to the acceptor end of tRNA(Asp/Asn).</text>
</comment>
<comment type="catalytic activity">
    <reaction evidence="1">
        <text>tRNA(Asx) + L-aspartate + ATP = L-aspartyl-tRNA(Asx) + AMP + diphosphate</text>
        <dbReference type="Rhea" id="RHEA:18349"/>
        <dbReference type="Rhea" id="RHEA-COMP:9710"/>
        <dbReference type="Rhea" id="RHEA-COMP:9711"/>
        <dbReference type="ChEBI" id="CHEBI:29991"/>
        <dbReference type="ChEBI" id="CHEBI:30616"/>
        <dbReference type="ChEBI" id="CHEBI:33019"/>
        <dbReference type="ChEBI" id="CHEBI:78442"/>
        <dbReference type="ChEBI" id="CHEBI:78516"/>
        <dbReference type="ChEBI" id="CHEBI:456215"/>
        <dbReference type="EC" id="6.1.1.23"/>
    </reaction>
</comment>
<comment type="subunit">
    <text evidence="1">Homodimer.</text>
</comment>
<comment type="subcellular location">
    <subcellularLocation>
        <location evidence="1">Cytoplasm</location>
    </subcellularLocation>
</comment>
<comment type="similarity">
    <text evidence="1">Belongs to the class-II aminoacyl-tRNA synthetase family. Type 1 subfamily.</text>
</comment>
<sequence length="591" mass="66339">MAERTHACGKVTVEAVGQTVQLKGWVQKRRDLGGLIFIDLRDRTGIVQVVFNPETSKEALEVAETIRSEYVLHVEGTVVERGEGAINDNMATGRIEVQATKVNVLNAAKTTPIIIADDTDASEDVRLKYRYLDLRRPVMFNTFKMRHDVTKTIRNFLDTEEFLEVETPILTKSTPEGARDYLVPSRVHDGEFYALPQSPQLFKQLLMVGGFERYYQVARCFRDEDLRADRQPEFTQIDIEASFLTQEEILDMMERMMTKVMKDAKGVEISAPFPRMTYADAMARYGSDKPDTRFEMELTDLSEFAAGCGFKVFTSAVESGGQVKAINAKGAASKYSRKDIDALTEFVKVYGAKGLAWLKVEEDGLKGPIAKFFGEEDANVLMTTLEATAGDLLLFVADKKSVVADSLGALRLRLGKELELIDESKYNFLWVTDWPLLEYDEDADRYFAAHHPFTMPFREDVELLETAPEKARAQAYDLVLNGYELGGGSLRIYERDVQEKMFKALGFSQEEAQEQFGFLLEAFEYGTPPHGGIALGLDRLVMLLAGRTNLRDTIAFPKTASASCLLTEAPSPVAEAQLEELNLKLSLKEEK</sequence>
<feature type="chain" id="PRO_0000110821" description="Aspartate--tRNA(Asp/Asn) ligase">
    <location>
        <begin position="1"/>
        <end position="591"/>
    </location>
</feature>
<feature type="region of interest" description="Aspartate" evidence="1">
    <location>
        <begin position="200"/>
        <end position="203"/>
    </location>
</feature>
<feature type="binding site" evidence="1">
    <location>
        <position position="176"/>
    </location>
    <ligand>
        <name>L-aspartate</name>
        <dbReference type="ChEBI" id="CHEBI:29991"/>
    </ligand>
</feature>
<feature type="binding site" evidence="1">
    <location>
        <begin position="222"/>
        <end position="224"/>
    </location>
    <ligand>
        <name>ATP</name>
        <dbReference type="ChEBI" id="CHEBI:30616"/>
    </ligand>
</feature>
<feature type="binding site" evidence="1">
    <location>
        <position position="222"/>
    </location>
    <ligand>
        <name>L-aspartate</name>
        <dbReference type="ChEBI" id="CHEBI:29991"/>
    </ligand>
</feature>
<feature type="binding site" evidence="1">
    <location>
        <position position="231"/>
    </location>
    <ligand>
        <name>ATP</name>
        <dbReference type="ChEBI" id="CHEBI:30616"/>
    </ligand>
</feature>
<feature type="binding site" evidence="1">
    <location>
        <position position="450"/>
    </location>
    <ligand>
        <name>L-aspartate</name>
        <dbReference type="ChEBI" id="CHEBI:29991"/>
    </ligand>
</feature>
<feature type="binding site" evidence="1">
    <location>
        <position position="484"/>
    </location>
    <ligand>
        <name>ATP</name>
        <dbReference type="ChEBI" id="CHEBI:30616"/>
    </ligand>
</feature>
<feature type="binding site" evidence="1">
    <location>
        <position position="491"/>
    </location>
    <ligand>
        <name>L-aspartate</name>
        <dbReference type="ChEBI" id="CHEBI:29991"/>
    </ligand>
</feature>
<feature type="binding site" evidence="1">
    <location>
        <begin position="536"/>
        <end position="539"/>
    </location>
    <ligand>
        <name>ATP</name>
        <dbReference type="ChEBI" id="CHEBI:30616"/>
    </ligand>
</feature>
<feature type="site" description="Important for tRNA non-discrimination" evidence="1">
    <location>
        <position position="84"/>
    </location>
</feature>
<proteinExistence type="inferred from homology"/>
<keyword id="KW-0030">Aminoacyl-tRNA synthetase</keyword>
<keyword id="KW-0067">ATP-binding</keyword>
<keyword id="KW-0963">Cytoplasm</keyword>
<keyword id="KW-0436">Ligase</keyword>
<keyword id="KW-0547">Nucleotide-binding</keyword>
<keyword id="KW-0648">Protein biosynthesis</keyword>
<accession>Q730D1</accession>
<gene>
    <name evidence="1" type="primary">aspS</name>
    <name type="ordered locus">BCE_4485</name>
</gene>